<evidence type="ECO:0000255" key="1">
    <source>
        <dbReference type="PROSITE-ProRule" id="PRU00238"/>
    </source>
</evidence>
<gene>
    <name type="primary">HBBY</name>
</gene>
<feature type="chain" id="PRO_0000053017" description="Hemoglobin subunit beta-Y">
    <location>
        <begin position="1"/>
        <end position="147"/>
    </location>
</feature>
<feature type="domain" description="Globin" evidence="1">
    <location>
        <begin position="3"/>
        <end position="147"/>
    </location>
</feature>
<feature type="binding site" description="distal binding residue">
    <location>
        <position position="64"/>
    </location>
    <ligand>
        <name>heme b</name>
        <dbReference type="ChEBI" id="CHEBI:60344"/>
    </ligand>
    <ligandPart>
        <name>Fe</name>
        <dbReference type="ChEBI" id="CHEBI:18248"/>
    </ligandPart>
</feature>
<feature type="binding site" description="proximal binding residue">
    <location>
        <position position="93"/>
    </location>
    <ligand>
        <name>heme b</name>
        <dbReference type="ChEBI" id="CHEBI:60344"/>
    </ligand>
    <ligandPart>
        <name>Fe</name>
        <dbReference type="ChEBI" id="CHEBI:18248"/>
    </ligandPart>
</feature>
<protein>
    <recommendedName>
        <fullName>Hemoglobin subunit beta-Y</fullName>
    </recommendedName>
    <alternativeName>
        <fullName>Beta-Y-globin</fullName>
    </alternativeName>
    <alternativeName>
        <fullName>Hemoglobin beta-Y chain</fullName>
    </alternativeName>
</protein>
<dbReference type="EMBL" id="X64179">
    <property type="protein sequence ID" value="CAA45518.1"/>
    <property type="molecule type" value="mRNA"/>
</dbReference>
<dbReference type="PIR" id="S22357">
    <property type="entry name" value="S22357"/>
</dbReference>
<dbReference type="RefSeq" id="NP_001268632.1">
    <property type="nucleotide sequence ID" value="NM_001281703.1"/>
</dbReference>
<dbReference type="SMR" id="P29626"/>
<dbReference type="STRING" id="10036.ENSMAUP00000000627"/>
<dbReference type="GeneID" id="101840881"/>
<dbReference type="KEGG" id="maua:101840881"/>
<dbReference type="eggNOG" id="KOG3378">
    <property type="taxonomic scope" value="Eukaryota"/>
</dbReference>
<dbReference type="OrthoDB" id="9886081at2759"/>
<dbReference type="Proteomes" id="UP000189706">
    <property type="component" value="Unplaced"/>
</dbReference>
<dbReference type="GO" id="GO:0072562">
    <property type="term" value="C:blood microparticle"/>
    <property type="evidence" value="ECO:0007669"/>
    <property type="project" value="TreeGrafter"/>
</dbReference>
<dbReference type="GO" id="GO:0031838">
    <property type="term" value="C:haptoglobin-hemoglobin complex"/>
    <property type="evidence" value="ECO:0007669"/>
    <property type="project" value="TreeGrafter"/>
</dbReference>
<dbReference type="GO" id="GO:0005833">
    <property type="term" value="C:hemoglobin complex"/>
    <property type="evidence" value="ECO:0007669"/>
    <property type="project" value="InterPro"/>
</dbReference>
<dbReference type="GO" id="GO:0031720">
    <property type="term" value="F:haptoglobin binding"/>
    <property type="evidence" value="ECO:0007669"/>
    <property type="project" value="TreeGrafter"/>
</dbReference>
<dbReference type="GO" id="GO:0020037">
    <property type="term" value="F:heme binding"/>
    <property type="evidence" value="ECO:0007669"/>
    <property type="project" value="InterPro"/>
</dbReference>
<dbReference type="GO" id="GO:0031721">
    <property type="term" value="F:hemoglobin alpha binding"/>
    <property type="evidence" value="ECO:0007669"/>
    <property type="project" value="TreeGrafter"/>
</dbReference>
<dbReference type="GO" id="GO:0046872">
    <property type="term" value="F:metal ion binding"/>
    <property type="evidence" value="ECO:0007669"/>
    <property type="project" value="UniProtKB-KW"/>
</dbReference>
<dbReference type="GO" id="GO:0043177">
    <property type="term" value="F:organic acid binding"/>
    <property type="evidence" value="ECO:0007669"/>
    <property type="project" value="TreeGrafter"/>
</dbReference>
<dbReference type="GO" id="GO:0019825">
    <property type="term" value="F:oxygen binding"/>
    <property type="evidence" value="ECO:0007669"/>
    <property type="project" value="InterPro"/>
</dbReference>
<dbReference type="GO" id="GO:0005344">
    <property type="term" value="F:oxygen carrier activity"/>
    <property type="evidence" value="ECO:0007669"/>
    <property type="project" value="UniProtKB-KW"/>
</dbReference>
<dbReference type="GO" id="GO:0004601">
    <property type="term" value="F:peroxidase activity"/>
    <property type="evidence" value="ECO:0007669"/>
    <property type="project" value="TreeGrafter"/>
</dbReference>
<dbReference type="GO" id="GO:0042744">
    <property type="term" value="P:hydrogen peroxide catabolic process"/>
    <property type="evidence" value="ECO:0007669"/>
    <property type="project" value="TreeGrafter"/>
</dbReference>
<dbReference type="CDD" id="cd08925">
    <property type="entry name" value="Hb-beta-like"/>
    <property type="match status" value="1"/>
</dbReference>
<dbReference type="FunFam" id="1.10.490.10:FF:000001">
    <property type="entry name" value="Hemoglobin subunit beta"/>
    <property type="match status" value="1"/>
</dbReference>
<dbReference type="Gene3D" id="1.10.490.10">
    <property type="entry name" value="Globins"/>
    <property type="match status" value="1"/>
</dbReference>
<dbReference type="InterPro" id="IPR000971">
    <property type="entry name" value="Globin"/>
</dbReference>
<dbReference type="InterPro" id="IPR009050">
    <property type="entry name" value="Globin-like_sf"/>
</dbReference>
<dbReference type="InterPro" id="IPR012292">
    <property type="entry name" value="Globin/Proto"/>
</dbReference>
<dbReference type="InterPro" id="IPR002337">
    <property type="entry name" value="Hemoglobin_b"/>
</dbReference>
<dbReference type="InterPro" id="IPR050056">
    <property type="entry name" value="Hemoglobin_oxygen_transport"/>
</dbReference>
<dbReference type="PANTHER" id="PTHR11442">
    <property type="entry name" value="HEMOGLOBIN FAMILY MEMBER"/>
    <property type="match status" value="1"/>
</dbReference>
<dbReference type="PANTHER" id="PTHR11442:SF7">
    <property type="entry name" value="HEMOGLOBIN SUBUNIT EPSILON"/>
    <property type="match status" value="1"/>
</dbReference>
<dbReference type="Pfam" id="PF00042">
    <property type="entry name" value="Globin"/>
    <property type="match status" value="1"/>
</dbReference>
<dbReference type="PRINTS" id="PR00814">
    <property type="entry name" value="BETAHAEM"/>
</dbReference>
<dbReference type="SUPFAM" id="SSF46458">
    <property type="entry name" value="Globin-like"/>
    <property type="match status" value="1"/>
</dbReference>
<dbReference type="PROSITE" id="PS01033">
    <property type="entry name" value="GLOBIN"/>
    <property type="match status" value="1"/>
</dbReference>
<name>HBBY_MESAU</name>
<organism>
    <name type="scientific">Mesocricetus auratus</name>
    <name type="common">Golden hamster</name>
    <dbReference type="NCBI Taxonomy" id="10036"/>
    <lineage>
        <taxon>Eukaryota</taxon>
        <taxon>Metazoa</taxon>
        <taxon>Chordata</taxon>
        <taxon>Craniata</taxon>
        <taxon>Vertebrata</taxon>
        <taxon>Euteleostomi</taxon>
        <taxon>Mammalia</taxon>
        <taxon>Eutheria</taxon>
        <taxon>Euarchontoglires</taxon>
        <taxon>Glires</taxon>
        <taxon>Rodentia</taxon>
        <taxon>Myomorpha</taxon>
        <taxon>Muroidea</taxon>
        <taxon>Cricetidae</taxon>
        <taxon>Cricetinae</taxon>
        <taxon>Mesocricetus</taxon>
    </lineage>
</organism>
<reference key="1">
    <citation type="journal article" date="1992" name="Biochim. Biophys. Acta">
        <title>Cloning and sequence analysis of two embryonic beta-like globin cDNAs (y and z) of hamster.</title>
        <authorList>
            <person name="Li H."/>
            <person name="Subar M."/>
            <person name="Lee K.M."/>
            <person name="Boussios T."/>
        </authorList>
    </citation>
    <scope>NUCLEOTIDE SEQUENCE [MRNA]</scope>
</reference>
<proteinExistence type="evidence at transcript level"/>
<comment type="function">
    <text>This is a minor early embryonic beta chain.</text>
</comment>
<comment type="subunit">
    <text>Heterotetramer of two alpha chains and two beta chains.</text>
</comment>
<comment type="similarity">
    <text evidence="1">Belongs to the globin family.</text>
</comment>
<accession>P29626</accession>
<keyword id="KW-0349">Heme</keyword>
<keyword id="KW-0408">Iron</keyword>
<keyword id="KW-0479">Metal-binding</keyword>
<keyword id="KW-0561">Oxygen transport</keyword>
<keyword id="KW-1185">Reference proteome</keyword>
<keyword id="KW-0813">Transport</keyword>
<sequence>MVHFTAEEKAAITSIWDKVDLEKAGGETLGRLLIVYPWTQRFFEKFGNLSPPQAIMGNPRIRAHGKKVLTSLGLAVQNMDNLKETFAHLSELHCDKLHVDPENFKLLGNMLVIVLSSHLGKEFTAEVQAAWQKLVAAVANALSLKYH</sequence>